<protein>
    <recommendedName>
        <fullName>Uncharacterized membrane protein RBE_0082</fullName>
    </recommendedName>
</protein>
<gene>
    <name type="ordered locus">RBE_0082</name>
</gene>
<sequence length="302" mass="34970">MSWIIFYTIIFALLVLDLGVIHKKNEVMSFKQSLLFSLFYFTISCLFGIYIYYNMGADSTREYYTCFLIEKAMSLDNIFVISIIFQFFKIPQKYQHRVLFFGIIGVIAFRAVMIYGGIILINKFSWLLYIFAVILIATGVKTFYVSHKTFDIQNSYLYKSIIKYLNVTPNLEGDKFFVTRNKKLYVTPLFISLILIEAIDLVFAIDSIPAIFAITNDAYIIYTSNIFAILGLRALFFCLAEIVERFSYIKYSLALILIFIGIKIFIHHYIAIPAYISLTVTITLLLLGIFASVIRKNIVDRQ</sequence>
<name>Y082_RICBR</name>
<organism>
    <name type="scientific">Rickettsia bellii (strain RML369-C)</name>
    <dbReference type="NCBI Taxonomy" id="336407"/>
    <lineage>
        <taxon>Bacteria</taxon>
        <taxon>Pseudomonadati</taxon>
        <taxon>Pseudomonadota</taxon>
        <taxon>Alphaproteobacteria</taxon>
        <taxon>Rickettsiales</taxon>
        <taxon>Rickettsiaceae</taxon>
        <taxon>Rickettsieae</taxon>
        <taxon>Rickettsia</taxon>
        <taxon>belli group</taxon>
    </lineage>
</organism>
<proteinExistence type="inferred from homology"/>
<keyword id="KW-1003">Cell membrane</keyword>
<keyword id="KW-0472">Membrane</keyword>
<keyword id="KW-0812">Transmembrane</keyword>
<keyword id="KW-1133">Transmembrane helix</keyword>
<reference key="1">
    <citation type="journal article" date="2006" name="PLoS Genet.">
        <title>Genome sequence of Rickettsia bellii illuminates the role of amoebae in gene exchanges between intracellular pathogens.</title>
        <authorList>
            <person name="Ogata H."/>
            <person name="La Scola B."/>
            <person name="Audic S."/>
            <person name="Renesto P."/>
            <person name="Blanc G."/>
            <person name="Robert C."/>
            <person name="Fournier P.-E."/>
            <person name="Claverie J.-M."/>
            <person name="Raoult D."/>
        </authorList>
    </citation>
    <scope>NUCLEOTIDE SEQUENCE [LARGE SCALE GENOMIC DNA]</scope>
    <source>
        <strain>RML369-C</strain>
    </source>
</reference>
<dbReference type="EMBL" id="CP000087">
    <property type="protein sequence ID" value="ABE04163.1"/>
    <property type="molecule type" value="Genomic_DNA"/>
</dbReference>
<dbReference type="RefSeq" id="WP_011476778.1">
    <property type="nucleotide sequence ID" value="NC_007940.1"/>
</dbReference>
<dbReference type="KEGG" id="rbe:RBE_0082"/>
<dbReference type="eggNOG" id="COG0861">
    <property type="taxonomic scope" value="Bacteria"/>
</dbReference>
<dbReference type="HOGENOM" id="CLU_045644_1_2_5"/>
<dbReference type="OrthoDB" id="9783692at2"/>
<dbReference type="Proteomes" id="UP000001951">
    <property type="component" value="Chromosome"/>
</dbReference>
<dbReference type="GO" id="GO:0005886">
    <property type="term" value="C:plasma membrane"/>
    <property type="evidence" value="ECO:0007669"/>
    <property type="project" value="UniProtKB-SubCell"/>
</dbReference>
<dbReference type="InterPro" id="IPR005496">
    <property type="entry name" value="Integral_membrane_TerC"/>
</dbReference>
<dbReference type="InterPro" id="IPR022369">
    <property type="entry name" value="Integral_membrane_TerC_rswitch"/>
</dbReference>
<dbReference type="NCBIfam" id="TIGR03718">
    <property type="entry name" value="R_switched_Alx"/>
    <property type="match status" value="1"/>
</dbReference>
<dbReference type="PANTHER" id="PTHR30238">
    <property type="entry name" value="MEMBRANE BOUND PREDICTED REDOX MODULATOR"/>
    <property type="match status" value="1"/>
</dbReference>
<dbReference type="PANTHER" id="PTHR30238:SF0">
    <property type="entry name" value="THYLAKOID MEMBRANE PROTEIN TERC, CHLOROPLASTIC"/>
    <property type="match status" value="1"/>
</dbReference>
<dbReference type="Pfam" id="PF03741">
    <property type="entry name" value="TerC"/>
    <property type="match status" value="1"/>
</dbReference>
<accession>Q1RKF1</accession>
<comment type="subcellular location">
    <subcellularLocation>
        <location evidence="2">Cell membrane</location>
        <topology evidence="2">Multi-pass membrane protein</topology>
    </subcellularLocation>
</comment>
<comment type="similarity">
    <text evidence="2">Belongs to the TerC family.</text>
</comment>
<evidence type="ECO:0000255" key="1"/>
<evidence type="ECO:0000305" key="2"/>
<feature type="chain" id="PRO_0000294410" description="Uncharacterized membrane protein RBE_0082">
    <location>
        <begin position="1"/>
        <end position="302"/>
    </location>
</feature>
<feature type="transmembrane region" description="Helical" evidence="1">
    <location>
        <begin position="1"/>
        <end position="21"/>
    </location>
</feature>
<feature type="transmembrane region" description="Helical" evidence="1">
    <location>
        <begin position="33"/>
        <end position="53"/>
    </location>
</feature>
<feature type="transmembrane region" description="Helical" evidence="1">
    <location>
        <begin position="67"/>
        <end position="87"/>
    </location>
</feature>
<feature type="transmembrane region" description="Helical" evidence="1">
    <location>
        <begin position="101"/>
        <end position="121"/>
    </location>
</feature>
<feature type="transmembrane region" description="Helical" evidence="1">
    <location>
        <begin position="124"/>
        <end position="144"/>
    </location>
</feature>
<feature type="transmembrane region" description="Helical" evidence="1">
    <location>
        <begin position="185"/>
        <end position="205"/>
    </location>
</feature>
<feature type="transmembrane region" description="Helical" evidence="1">
    <location>
        <begin position="220"/>
        <end position="240"/>
    </location>
</feature>
<feature type="transmembrane region" description="Helical" evidence="1">
    <location>
        <begin position="253"/>
        <end position="273"/>
    </location>
</feature>
<feature type="transmembrane region" description="Helical" evidence="1">
    <location>
        <begin position="274"/>
        <end position="294"/>
    </location>
</feature>